<evidence type="ECO:0000255" key="1">
    <source>
        <dbReference type="PROSITE-ProRule" id="PRU00309"/>
    </source>
</evidence>
<evidence type="ECO:0000256" key="2">
    <source>
        <dbReference type="SAM" id="MobiDB-lite"/>
    </source>
</evidence>
<evidence type="ECO:0000269" key="3">
    <source>
    </source>
</evidence>
<gene>
    <name type="primary">lin-36</name>
    <name type="ORF">F44B9.6</name>
</gene>
<name>LIN36_CAEEL</name>
<accession>P34427</accession>
<accession>Q9U552</accession>
<organism>
    <name type="scientific">Caenorhabditis elegans</name>
    <dbReference type="NCBI Taxonomy" id="6239"/>
    <lineage>
        <taxon>Eukaryota</taxon>
        <taxon>Metazoa</taxon>
        <taxon>Ecdysozoa</taxon>
        <taxon>Nematoda</taxon>
        <taxon>Chromadorea</taxon>
        <taxon>Rhabditida</taxon>
        <taxon>Rhabditina</taxon>
        <taxon>Rhabditomorpha</taxon>
        <taxon>Rhabditoidea</taxon>
        <taxon>Rhabditidae</taxon>
        <taxon>Peloderinae</taxon>
        <taxon>Caenorhabditis</taxon>
    </lineage>
</organism>
<proteinExistence type="evidence at protein level"/>
<dbReference type="EMBL" id="AF104917">
    <property type="protein sequence ID" value="AAD22772.1"/>
    <property type="molecule type" value="mRNA"/>
</dbReference>
<dbReference type="EMBL" id="FO080400">
    <property type="protein sequence ID" value="CCD63449.1"/>
    <property type="molecule type" value="Genomic_DNA"/>
</dbReference>
<dbReference type="PIR" id="S44812">
    <property type="entry name" value="S44812"/>
</dbReference>
<dbReference type="RefSeq" id="NP_498747.2">
    <property type="nucleotide sequence ID" value="NM_066346.4"/>
</dbReference>
<dbReference type="BioGRID" id="41334">
    <property type="interactions" value="52"/>
</dbReference>
<dbReference type="DIP" id="DIP-26933N"/>
<dbReference type="FunCoup" id="P34427">
    <property type="interactions" value="1579"/>
</dbReference>
<dbReference type="IntAct" id="P34427">
    <property type="interactions" value="38"/>
</dbReference>
<dbReference type="MINT" id="P34427"/>
<dbReference type="STRING" id="6239.F44B9.6.1"/>
<dbReference type="iPTMnet" id="P34427"/>
<dbReference type="PaxDb" id="6239-F44B9.6"/>
<dbReference type="PeptideAtlas" id="P34427"/>
<dbReference type="EnsemblMetazoa" id="F44B9.6.1">
    <property type="protein sequence ID" value="F44B9.6.1"/>
    <property type="gene ID" value="WBGene00003021"/>
</dbReference>
<dbReference type="GeneID" id="176128"/>
<dbReference type="KEGG" id="cel:CELE_F44B9.6"/>
<dbReference type="UCSC" id="F44B9.6">
    <property type="organism name" value="c. elegans"/>
</dbReference>
<dbReference type="AGR" id="WB:WBGene00003021"/>
<dbReference type="CTD" id="176128"/>
<dbReference type="WormBase" id="F44B9.6">
    <property type="protein sequence ID" value="CE30992"/>
    <property type="gene ID" value="WBGene00003021"/>
    <property type="gene designation" value="lin-36"/>
</dbReference>
<dbReference type="eggNOG" id="ENOG502TG7M">
    <property type="taxonomic scope" value="Eukaryota"/>
</dbReference>
<dbReference type="HOGENOM" id="CLU_010483_0_0_1"/>
<dbReference type="InParanoid" id="P34427"/>
<dbReference type="OMA" id="YSNDGAQ"/>
<dbReference type="OrthoDB" id="5871148at2759"/>
<dbReference type="SignaLink" id="P34427"/>
<dbReference type="PRO" id="PR:P34427"/>
<dbReference type="Proteomes" id="UP000001940">
    <property type="component" value="Chromosome III"/>
</dbReference>
<dbReference type="Bgee" id="WBGene00003021">
    <property type="expression patterns" value="Expressed in pharyngeal muscle cell (C elegans) and 4 other cell types or tissues"/>
</dbReference>
<dbReference type="GO" id="GO:0005634">
    <property type="term" value="C:nucleus"/>
    <property type="evidence" value="ECO:0007669"/>
    <property type="project" value="UniProtKB-SubCell"/>
</dbReference>
<dbReference type="GO" id="GO:0003677">
    <property type="term" value="F:DNA binding"/>
    <property type="evidence" value="ECO:0007669"/>
    <property type="project" value="UniProtKB-KW"/>
</dbReference>
<dbReference type="GO" id="GO:0008270">
    <property type="term" value="F:zinc ion binding"/>
    <property type="evidence" value="ECO:0007669"/>
    <property type="project" value="UniProtKB-KW"/>
</dbReference>
<dbReference type="GO" id="GO:0048557">
    <property type="term" value="P:embryonic digestive tract morphogenesis"/>
    <property type="evidence" value="ECO:0000316"/>
    <property type="project" value="WormBase"/>
</dbReference>
<dbReference type="InterPro" id="IPR006612">
    <property type="entry name" value="THAP_Znf"/>
</dbReference>
<dbReference type="InterPro" id="IPR053361">
    <property type="entry name" value="Vulval_dev_neg_regulator"/>
</dbReference>
<dbReference type="InterPro" id="IPR013087">
    <property type="entry name" value="Znf_C2H2_type"/>
</dbReference>
<dbReference type="PANTHER" id="PTHR48233">
    <property type="entry name" value="MUCIN 4B, ISOFORM B-RELATED"/>
    <property type="match status" value="1"/>
</dbReference>
<dbReference type="PANTHER" id="PTHR48233:SF2">
    <property type="entry name" value="PROTEIN LIN-36"/>
    <property type="match status" value="1"/>
</dbReference>
<dbReference type="SMART" id="SM00355">
    <property type="entry name" value="ZnF_C2H2"/>
    <property type="match status" value="2"/>
</dbReference>
<dbReference type="PROSITE" id="PS50950">
    <property type="entry name" value="ZF_THAP"/>
    <property type="match status" value="1"/>
</dbReference>
<protein>
    <recommendedName>
        <fullName>Protein lin-36</fullName>
    </recommendedName>
    <alternativeName>
        <fullName>Abnormal cell lineage protein 36</fullName>
    </alternativeName>
</protein>
<reference key="1">
    <citation type="journal article" date="1999" name="Development">
        <title>The C. elegans gene lin-36 acts cell autonomously in the lin-35 Rb pathway.</title>
        <authorList>
            <person name="Thomas J.H."/>
            <person name="Horvitz H.R."/>
        </authorList>
    </citation>
    <scope>NUCLEOTIDE SEQUENCE [MRNA]</scope>
    <scope>MUTAGENESIS OF ARG-189; GLU-241; PRO-246; HIS-284; GLY-324 AND TYR-325</scope>
    <scope>FUNCTION</scope>
    <scope>SUBCELLULAR LOCATION</scope>
    <scope>TISSUE SPECIFICITY</scope>
</reference>
<reference key="2">
    <citation type="journal article" date="1994" name="Nature">
        <title>2.2 Mb of contiguous nucleotide sequence from chromosome III of C. elegans.</title>
        <authorList>
            <person name="Wilson R."/>
            <person name="Ainscough R."/>
            <person name="Anderson K."/>
            <person name="Baynes C."/>
            <person name="Berks M."/>
            <person name="Bonfield J."/>
            <person name="Burton J."/>
            <person name="Connell M."/>
            <person name="Copsey T."/>
            <person name="Cooper J."/>
            <person name="Coulson A."/>
            <person name="Craxton M."/>
            <person name="Dear S."/>
            <person name="Du Z."/>
            <person name="Durbin R."/>
            <person name="Favello A."/>
            <person name="Fraser A."/>
            <person name="Fulton L."/>
            <person name="Gardner A."/>
            <person name="Green P."/>
            <person name="Hawkins T."/>
            <person name="Hillier L."/>
            <person name="Jier M."/>
            <person name="Johnston L."/>
            <person name="Jones M."/>
            <person name="Kershaw J."/>
            <person name="Kirsten J."/>
            <person name="Laisster N."/>
            <person name="Latreille P."/>
            <person name="Lightning J."/>
            <person name="Lloyd C."/>
            <person name="Mortimore B."/>
            <person name="O'Callaghan M."/>
            <person name="Parsons J."/>
            <person name="Percy C."/>
            <person name="Rifken L."/>
            <person name="Roopra A."/>
            <person name="Saunders D."/>
            <person name="Shownkeen R."/>
            <person name="Sims M."/>
            <person name="Smaldon N."/>
            <person name="Smith A."/>
            <person name="Smith M."/>
            <person name="Sonnhammer E."/>
            <person name="Staden R."/>
            <person name="Sulston J."/>
            <person name="Thierry-Mieg J."/>
            <person name="Thomas K."/>
            <person name="Vaudin M."/>
            <person name="Vaughan K."/>
            <person name="Waterston R."/>
            <person name="Watson A."/>
            <person name="Weinstock L."/>
            <person name="Wilkinson-Sproat J."/>
            <person name="Wohldman P."/>
        </authorList>
    </citation>
    <scope>NUCLEOTIDE SEQUENCE [LARGE SCALE GENOMIC DNA]</scope>
    <source>
        <strain>Bristol N2</strain>
    </source>
</reference>
<reference key="3">
    <citation type="journal article" date="1998" name="Science">
        <title>Genome sequence of the nematode C. elegans: a platform for investigating biology.</title>
        <authorList>
            <consortium name="The C. elegans sequencing consortium"/>
        </authorList>
    </citation>
    <scope>NUCLEOTIDE SEQUENCE [LARGE SCALE GENOMIC DNA]</scope>
    <source>
        <strain>Bristol N2</strain>
    </source>
</reference>
<keyword id="KW-0217">Developmental protein</keyword>
<keyword id="KW-0238">DNA-binding</keyword>
<keyword id="KW-0479">Metal-binding</keyword>
<keyword id="KW-0539">Nucleus</keyword>
<keyword id="KW-1185">Reference proteome</keyword>
<keyword id="KW-0862">Zinc</keyword>
<keyword id="KW-0863">Zinc-finger</keyword>
<feature type="chain" id="PRO_0000068655" description="Protein lin-36">
    <location>
        <begin position="1"/>
        <end position="962"/>
    </location>
</feature>
<feature type="zinc finger region" description="THAP-type" evidence="1">
    <location>
        <begin position="161"/>
        <end position="249"/>
    </location>
</feature>
<feature type="region of interest" description="Disordered" evidence="2">
    <location>
        <begin position="1"/>
        <end position="53"/>
    </location>
</feature>
<feature type="region of interest" description="Disordered" evidence="2">
    <location>
        <begin position="74"/>
        <end position="99"/>
    </location>
</feature>
<feature type="region of interest" description="Disordered" evidence="2">
    <location>
        <begin position="452"/>
        <end position="575"/>
    </location>
</feature>
<feature type="region of interest" description="Disordered" evidence="2">
    <location>
        <begin position="612"/>
        <end position="676"/>
    </location>
</feature>
<feature type="region of interest" description="Disordered" evidence="2">
    <location>
        <begin position="744"/>
        <end position="788"/>
    </location>
</feature>
<feature type="region of interest" description="Disordered" evidence="2">
    <location>
        <begin position="932"/>
        <end position="962"/>
    </location>
</feature>
<feature type="compositionally biased region" description="Basic and acidic residues" evidence="2">
    <location>
        <begin position="23"/>
        <end position="40"/>
    </location>
</feature>
<feature type="compositionally biased region" description="Polar residues" evidence="2">
    <location>
        <begin position="74"/>
        <end position="95"/>
    </location>
</feature>
<feature type="compositionally biased region" description="Basic and acidic residues" evidence="2">
    <location>
        <begin position="452"/>
        <end position="472"/>
    </location>
</feature>
<feature type="compositionally biased region" description="Basic and acidic residues" evidence="2">
    <location>
        <begin position="534"/>
        <end position="570"/>
    </location>
</feature>
<feature type="compositionally biased region" description="Low complexity" evidence="2">
    <location>
        <begin position="626"/>
        <end position="637"/>
    </location>
</feature>
<feature type="compositionally biased region" description="Basic and acidic residues" evidence="2">
    <location>
        <begin position="647"/>
        <end position="658"/>
    </location>
</feature>
<feature type="compositionally biased region" description="Low complexity" evidence="2">
    <location>
        <begin position="939"/>
        <end position="951"/>
    </location>
</feature>
<feature type="compositionally biased region" description="Polar residues" evidence="2">
    <location>
        <begin position="952"/>
        <end position="962"/>
    </location>
</feature>
<feature type="mutagenesis site" description="In N772." evidence="3">
    <original>R</original>
    <variation>Q</variation>
    <location>
        <position position="189"/>
    </location>
</feature>
<feature type="mutagenesis site" description="In N747." evidence="3">
    <original>E</original>
    <variation>K</variation>
    <location>
        <position position="241"/>
    </location>
</feature>
<feature type="mutagenesis site" description="In N750 and N2240." evidence="3">
    <original>P</original>
    <variation>L</variation>
    <location>
        <position position="246"/>
    </location>
</feature>
<feature type="mutagenesis site" description="In N3097." evidence="3">
    <original>H</original>
    <variation>Y</variation>
    <location>
        <position position="284"/>
    </location>
</feature>
<feature type="mutagenesis site" description="In N2243." evidence="3">
    <original>G</original>
    <variation>E</variation>
    <location>
        <position position="324"/>
    </location>
</feature>
<feature type="mutagenesis site" description="In N3090." evidence="3">
    <original>Y</original>
    <variation>N</variation>
    <location>
        <position position="325"/>
    </location>
</feature>
<comment type="function">
    <text evidence="3">Required to negatively regulate vulval development. Antagonizes Ras-mediated vulval induction. Acts cell autonomously.</text>
</comment>
<comment type="interaction">
    <interactant intactId="EBI-322214">
        <id>P34427</id>
    </interactant>
    <interactant intactId="EBI-316062">
        <id>P51875</id>
        <label>goa-1</label>
    </interactant>
    <organismsDiffer>false</organismsDiffer>
    <experiments>3</experiments>
</comment>
<comment type="subcellular location">
    <subcellularLocation>
        <location evidence="3">Nucleus</location>
    </subcellularLocation>
</comment>
<comment type="tissue specificity">
    <text evidence="3">Expressed in vulval precursor P(3-8).p cells and their descendants, neurons of the head, tail and ventral cord, hypodermal and intestinal cells and germline cells.</text>
</comment>
<sequence>MSEELLSTRPSKRDYNDIEEPEDSHVTVHSVEQDSQHSGEESSTVDALQETEGDVDVIGEDEDEHDIPVMPTVTSSGEVLDESQVTPTKQASSSQPREEIIHGKGESVYSSFPCQVIPETLSRMTRTPPDGEHLEVYRMSNGRLRIYVVDHFKKFSPYSNLTHKPCTVCNRVMKSGEMHLNFPADLDRRRIWANLLGFKYKDILRSKMGPVSFSIAAGPICTEHFAEECFRNHNFNKSAIEAFGVPVAISPDVKTTPSKKSSRVPWVCTVCEFHSCSVVELQTHLLNHTEEMLKKKDNVLDVPEAGFMCPFCRKCTYGYKTISGYRRHLNAGPIHHCHLRRIYEFAKMNCRATELDPAESWDNWTRRNVYVAYHGCEPPANEIVLTPSPTKKAYVQNPEERTKMVHDEEKRKKAVRTLSFVGKEGGTSVNDLNVMQRQVFLQLRREAEINTKAEESAQGTKEQESSQKKHAEEESDDVSELTSHQSPQAPMGSGERRKATRLATSATNSPIKKVAKHEVPATAPSTPAKKRKISHEEEHDPTPESVEREPTVSPNDPRERLRLKERDEQFAKMVQKRSQQVKRLINAKQFKKQEAATKKPRKALAYNLAKGIAATSSTEPEDKVTSSEQTPEPTTSQKFIARNTRSKTKESAVQKVEKPATPVAKPAPVEKEPEERPLKSMLARSFVAGVRPSMAKYQIPLESFTATASLGGGRSLSSGVISRPPTSSSPGGIFSQRVMGAVAQEKGPAKRPSVLSRRPLILSPRKKTSTPRPTLSHHESSPNFSASSPVVVSDEYLIPATDMEVEMVEEVIDSMGNSSSEDVATSSTSSERQPMLTLAEALEMDGSSGTVKDQDMEEISKEMMKDAHYYRAMEDAIKCRTVTKMRADMRLSRHCIRQIEAARARARLFGERTEDYQIFYSNDGAQVLTKKDPKWRELQQQQQQQQQQQEQFPGQGSSDSQQ</sequence>